<accession>G3LU44</accession>
<sequence>MIIFKDLLTGDEMFTDSSKYKVVDGCLYEVECRHISRRHGDIQLDGANPSQEEADEATDDIVESGLDLVLNQRLIETGFSKNDYKVYLKGYTKALQDKWKEMEKSESEINEAKTKLTEAVKKVLPKLSDLQFFMGESSNPDGLIALLEYRQVDEKEVPIMMFFKHGLDEEKV</sequence>
<evidence type="ECO:0000250" key="1"/>
<evidence type="ECO:0000255" key="2">
    <source>
        <dbReference type="PROSITE-ProRule" id="PRU01133"/>
    </source>
</evidence>
<evidence type="ECO:0000269" key="3">
    <source>
    </source>
</evidence>
<evidence type="ECO:0000305" key="4">
    <source>
    </source>
</evidence>
<reference key="1">
    <citation type="journal article" date="2012" name="Int. J. Biochem. Cell Biol.">
        <title>Molecular cloning, heterologous expression and functional characterization of a novel translationally-controlled tumor protein (TCTP) family member from Loxosceles intermedia (brown spider) venom.</title>
        <authorList>
            <person name="Sade Y.B."/>
            <person name="Boia-Ferreira M."/>
            <person name="Gremski L.H."/>
            <person name="da Silveira R.B."/>
            <person name="Gremski W."/>
            <person name="Senff-Ribeiro A."/>
            <person name="Chaim O.M."/>
            <person name="Veiga S.S."/>
        </authorList>
    </citation>
    <scope>NUCLEOTIDE SEQUENCE [MRNA]</scope>
    <scope>FUNCTION</scope>
    <source>
        <tissue>Venom gland</tissue>
    </source>
</reference>
<keyword id="KW-0964">Secreted</keyword>
<comment type="function">
    <text evidence="3">Venom protein that causes edema, enhances vascular permeability and is likely related to the inflammatory activity of the venom.</text>
</comment>
<comment type="subcellular location">
    <subcellularLocation>
        <location evidence="1">Secreted</location>
    </subcellularLocation>
</comment>
<comment type="tissue specificity">
    <text>Expressed by the venom gland.</text>
</comment>
<comment type="miscellaneous">
    <text evidence="4">Secretion of this protein from cells may proceed via an ER/Golgi-independent pathway, probably mediated by secreted vesicles called exosomes.</text>
</comment>
<comment type="similarity">
    <text evidence="2">Belongs to the TCTP family.</text>
</comment>
<protein>
    <recommendedName>
        <fullName>Translationally-controlled tumor protein homolog</fullName>
        <shortName>LiTCTP</shortName>
    </recommendedName>
    <alternativeName>
        <fullName>Histamine-releasing factor</fullName>
        <shortName>HRF</shortName>
    </alternativeName>
</protein>
<name>TCTP_LOXIN</name>
<proteinExistence type="evidence at transcript level"/>
<feature type="chain" id="PRO_0000425848" description="Translationally-controlled tumor protein homolog">
    <location>
        <begin position="1"/>
        <end position="172"/>
    </location>
</feature>
<feature type="domain" description="TCTP" evidence="2">
    <location>
        <begin position="1"/>
        <end position="172"/>
    </location>
</feature>
<organism>
    <name type="scientific">Loxosceles intermedia</name>
    <name type="common">Brown spider</name>
    <dbReference type="NCBI Taxonomy" id="58218"/>
    <lineage>
        <taxon>Eukaryota</taxon>
        <taxon>Metazoa</taxon>
        <taxon>Ecdysozoa</taxon>
        <taxon>Arthropoda</taxon>
        <taxon>Chelicerata</taxon>
        <taxon>Arachnida</taxon>
        <taxon>Araneae</taxon>
        <taxon>Araneomorphae</taxon>
        <taxon>Haplogynae</taxon>
        <taxon>Scytodoidea</taxon>
        <taxon>Sicariidae</taxon>
        <taxon>Loxosceles</taxon>
    </lineage>
</organism>
<dbReference type="EMBL" id="JN544929">
    <property type="protein sequence ID" value="AEN55462.1"/>
    <property type="molecule type" value="mRNA"/>
</dbReference>
<dbReference type="SMR" id="G3LU44"/>
<dbReference type="ArachnoServer" id="AS001612">
    <property type="toxin name" value="TCTP1-1-Loxosceles intermedia"/>
</dbReference>
<dbReference type="GO" id="GO:0005737">
    <property type="term" value="C:cytoplasm"/>
    <property type="evidence" value="ECO:0007669"/>
    <property type="project" value="TreeGrafter"/>
</dbReference>
<dbReference type="GO" id="GO:0005576">
    <property type="term" value="C:extracellular region"/>
    <property type="evidence" value="ECO:0007669"/>
    <property type="project" value="UniProtKB-SubCell"/>
</dbReference>
<dbReference type="GO" id="GO:0005509">
    <property type="term" value="F:calcium ion binding"/>
    <property type="evidence" value="ECO:0007669"/>
    <property type="project" value="TreeGrafter"/>
</dbReference>
<dbReference type="FunFam" id="2.170.150.10:FF:000002">
    <property type="entry name" value="Translationally-controlled tumor protein homolog"/>
    <property type="match status" value="1"/>
</dbReference>
<dbReference type="Gene3D" id="2.170.150.10">
    <property type="entry name" value="Metal Binding Protein, Guanine Nucleotide Exchange Factor, Chain A"/>
    <property type="match status" value="1"/>
</dbReference>
<dbReference type="InterPro" id="IPR011057">
    <property type="entry name" value="Mss4-like_sf"/>
</dbReference>
<dbReference type="InterPro" id="IPR011323">
    <property type="entry name" value="Mss4/transl-control_tumour"/>
</dbReference>
<dbReference type="InterPro" id="IPR034737">
    <property type="entry name" value="TCTP"/>
</dbReference>
<dbReference type="InterPro" id="IPR018103">
    <property type="entry name" value="Translation_control_tumour_CS"/>
</dbReference>
<dbReference type="InterPro" id="IPR018105">
    <property type="entry name" value="Translational_control_tumour_p"/>
</dbReference>
<dbReference type="PANTHER" id="PTHR11991">
    <property type="entry name" value="TRANSLATIONALLY CONTROLLED TUMOR PROTEIN-RELATED"/>
    <property type="match status" value="1"/>
</dbReference>
<dbReference type="PANTHER" id="PTHR11991:SF0">
    <property type="entry name" value="TRANSLATIONALLY-CONTROLLED TUMOR PROTEIN"/>
    <property type="match status" value="1"/>
</dbReference>
<dbReference type="Pfam" id="PF00838">
    <property type="entry name" value="TCTP"/>
    <property type="match status" value="1"/>
</dbReference>
<dbReference type="PRINTS" id="PR01653">
    <property type="entry name" value="TCTPROTEIN"/>
</dbReference>
<dbReference type="SUPFAM" id="SSF51316">
    <property type="entry name" value="Mss4-like"/>
    <property type="match status" value="1"/>
</dbReference>
<dbReference type="PROSITE" id="PS01003">
    <property type="entry name" value="TCTP_2"/>
    <property type="match status" value="1"/>
</dbReference>
<dbReference type="PROSITE" id="PS51797">
    <property type="entry name" value="TCTP_3"/>
    <property type="match status" value="1"/>
</dbReference>